<accession>Q1L8G7</accession>
<accession>Q1RM13</accession>
<sequence>MPLGLKPCCAVCKTQSSSMWKKGNQGEILCNGCTGKAVSSGGSGASASSTIQQNNGGGKQSKQEIHRRSARLRSTKYKAPASEKKVSTKGKGRRHIFKLKNPIKAPESVSTIITSESMFYKGIYYQIGDVIKVIDEDDGKPYYAQIRGFVQDQYCEKSAALTWLIPTQASPRDRFDPSTYIVGPEEDLPRKMEYLEFVCHAPSEYFKSRSCPFPTLPVRPEKGYVWTHIGPTPAVAIKETVG</sequence>
<dbReference type="EMBL" id="CR786578">
    <property type="protein sequence ID" value="CAK10740.1"/>
    <property type="molecule type" value="Genomic_DNA"/>
</dbReference>
<dbReference type="EMBL" id="BC115186">
    <property type="protein sequence ID" value="AAI15187.1"/>
    <property type="molecule type" value="mRNA"/>
</dbReference>
<dbReference type="RefSeq" id="NP_001035454.1">
    <property type="nucleotide sequence ID" value="NM_001040364.1"/>
</dbReference>
<dbReference type="FunCoup" id="Q1L8G7">
    <property type="interactions" value="2064"/>
</dbReference>
<dbReference type="STRING" id="7955.ENSDARP00000051711"/>
<dbReference type="PaxDb" id="7955-ENSDARP00000051711"/>
<dbReference type="Ensembl" id="ENSDART00000051712">
    <property type="protein sequence ID" value="ENSDARP00000051711"/>
    <property type="gene ID" value="ENSDARG00000027612"/>
</dbReference>
<dbReference type="GeneID" id="678617"/>
<dbReference type="KEGG" id="dre:678617"/>
<dbReference type="AGR" id="ZFIN:ZDB-GENE-050629-1"/>
<dbReference type="CTD" id="57798"/>
<dbReference type="ZFIN" id="ZDB-GENE-050629-1">
    <property type="gene designation" value="gatad1"/>
</dbReference>
<dbReference type="eggNOG" id="ENOG502QUY5">
    <property type="taxonomic scope" value="Eukaryota"/>
</dbReference>
<dbReference type="HOGENOM" id="CLU_070432_0_0_1"/>
<dbReference type="InParanoid" id="Q1L8G7"/>
<dbReference type="OMA" id="LLTDQYC"/>
<dbReference type="OrthoDB" id="9994231at2759"/>
<dbReference type="PhylomeDB" id="Q1L8G7"/>
<dbReference type="TreeFam" id="TF325354"/>
<dbReference type="PRO" id="PR:Q1L8G7"/>
<dbReference type="Proteomes" id="UP000000437">
    <property type="component" value="Chromosome 19"/>
</dbReference>
<dbReference type="Bgee" id="ENSDARG00000027612">
    <property type="expression patterns" value="Expressed in testis and 24 other cell types or tissues"/>
</dbReference>
<dbReference type="GO" id="GO:0031674">
    <property type="term" value="C:I band"/>
    <property type="evidence" value="ECO:0000314"/>
    <property type="project" value="ZFIN"/>
</dbReference>
<dbReference type="GO" id="GO:0005634">
    <property type="term" value="C:nucleus"/>
    <property type="evidence" value="ECO:0000314"/>
    <property type="project" value="ZFIN"/>
</dbReference>
<dbReference type="GO" id="GO:0043565">
    <property type="term" value="F:sequence-specific DNA binding"/>
    <property type="evidence" value="ECO:0007669"/>
    <property type="project" value="InterPro"/>
</dbReference>
<dbReference type="GO" id="GO:0008270">
    <property type="term" value="F:zinc ion binding"/>
    <property type="evidence" value="ECO:0007669"/>
    <property type="project" value="UniProtKB-KW"/>
</dbReference>
<dbReference type="GO" id="GO:0006325">
    <property type="term" value="P:chromatin organization"/>
    <property type="evidence" value="ECO:0000318"/>
    <property type="project" value="GO_Central"/>
</dbReference>
<dbReference type="GO" id="GO:0006355">
    <property type="term" value="P:regulation of DNA-templated transcription"/>
    <property type="evidence" value="ECO:0007669"/>
    <property type="project" value="InterPro"/>
</dbReference>
<dbReference type="InterPro" id="IPR039050">
    <property type="entry name" value="GATAD1"/>
</dbReference>
<dbReference type="InterPro" id="IPR000679">
    <property type="entry name" value="Znf_GATA"/>
</dbReference>
<dbReference type="PANTHER" id="PTHR13340">
    <property type="entry name" value="GATA ZINC FINGER DOMAIN-CONTAINING"/>
    <property type="match status" value="1"/>
</dbReference>
<dbReference type="PANTHER" id="PTHR13340:SF2">
    <property type="entry name" value="GATA ZINC FINGER DOMAIN-CONTAINING PROTEIN 1"/>
    <property type="match status" value="1"/>
</dbReference>
<dbReference type="SUPFAM" id="SSF57716">
    <property type="entry name" value="Glucocorticoid receptor-like (DNA-binding domain)"/>
    <property type="match status" value="1"/>
</dbReference>
<dbReference type="PROSITE" id="PS50114">
    <property type="entry name" value="GATA_ZN_FINGER_2"/>
    <property type="match status" value="1"/>
</dbReference>
<gene>
    <name type="primary">gatad1</name>
    <name type="ORF">si:dkey-231l1.7</name>
    <name type="ORF">zgc:136582</name>
</gene>
<protein>
    <recommendedName>
        <fullName>GATA zinc finger domain-containing protein 1</fullName>
    </recommendedName>
</protein>
<evidence type="ECO:0000250" key="1">
    <source>
        <dbReference type="UniProtKB" id="Q8WUU5"/>
    </source>
</evidence>
<evidence type="ECO:0000255" key="2">
    <source>
        <dbReference type="PROSITE-ProRule" id="PRU00094"/>
    </source>
</evidence>
<evidence type="ECO:0000256" key="3">
    <source>
        <dbReference type="SAM" id="MobiDB-lite"/>
    </source>
</evidence>
<evidence type="ECO:0000305" key="4"/>
<name>GATD1_DANRE</name>
<comment type="function">
    <text evidence="1">Component of some chromatin complex recruited to chromatin sites methylated 'Lys-4' of histone H3 (H3K4me), with a preference for trimethylated form (H3K4me3).</text>
</comment>
<comment type="subcellular location">
    <subcellularLocation>
        <location evidence="1">Nucleus</location>
    </subcellularLocation>
</comment>
<keyword id="KW-0479">Metal-binding</keyword>
<keyword id="KW-0539">Nucleus</keyword>
<keyword id="KW-1185">Reference proteome</keyword>
<keyword id="KW-0862">Zinc</keyword>
<keyword id="KW-0863">Zinc-finger</keyword>
<reference key="1">
    <citation type="journal article" date="2013" name="Nature">
        <title>The zebrafish reference genome sequence and its relationship to the human genome.</title>
        <authorList>
            <person name="Howe K."/>
            <person name="Clark M.D."/>
            <person name="Torroja C.F."/>
            <person name="Torrance J."/>
            <person name="Berthelot C."/>
            <person name="Muffato M."/>
            <person name="Collins J.E."/>
            <person name="Humphray S."/>
            <person name="McLaren K."/>
            <person name="Matthews L."/>
            <person name="McLaren S."/>
            <person name="Sealy I."/>
            <person name="Caccamo M."/>
            <person name="Churcher C."/>
            <person name="Scott C."/>
            <person name="Barrett J.C."/>
            <person name="Koch R."/>
            <person name="Rauch G.J."/>
            <person name="White S."/>
            <person name="Chow W."/>
            <person name="Kilian B."/>
            <person name="Quintais L.T."/>
            <person name="Guerra-Assuncao J.A."/>
            <person name="Zhou Y."/>
            <person name="Gu Y."/>
            <person name="Yen J."/>
            <person name="Vogel J.H."/>
            <person name="Eyre T."/>
            <person name="Redmond S."/>
            <person name="Banerjee R."/>
            <person name="Chi J."/>
            <person name="Fu B."/>
            <person name="Langley E."/>
            <person name="Maguire S.F."/>
            <person name="Laird G.K."/>
            <person name="Lloyd D."/>
            <person name="Kenyon E."/>
            <person name="Donaldson S."/>
            <person name="Sehra H."/>
            <person name="Almeida-King J."/>
            <person name="Loveland J."/>
            <person name="Trevanion S."/>
            <person name="Jones M."/>
            <person name="Quail M."/>
            <person name="Willey D."/>
            <person name="Hunt A."/>
            <person name="Burton J."/>
            <person name="Sims S."/>
            <person name="McLay K."/>
            <person name="Plumb B."/>
            <person name="Davis J."/>
            <person name="Clee C."/>
            <person name="Oliver K."/>
            <person name="Clark R."/>
            <person name="Riddle C."/>
            <person name="Elliot D."/>
            <person name="Threadgold G."/>
            <person name="Harden G."/>
            <person name="Ware D."/>
            <person name="Begum S."/>
            <person name="Mortimore B."/>
            <person name="Kerry G."/>
            <person name="Heath P."/>
            <person name="Phillimore B."/>
            <person name="Tracey A."/>
            <person name="Corby N."/>
            <person name="Dunn M."/>
            <person name="Johnson C."/>
            <person name="Wood J."/>
            <person name="Clark S."/>
            <person name="Pelan S."/>
            <person name="Griffiths G."/>
            <person name="Smith M."/>
            <person name="Glithero R."/>
            <person name="Howden P."/>
            <person name="Barker N."/>
            <person name="Lloyd C."/>
            <person name="Stevens C."/>
            <person name="Harley J."/>
            <person name="Holt K."/>
            <person name="Panagiotidis G."/>
            <person name="Lovell J."/>
            <person name="Beasley H."/>
            <person name="Henderson C."/>
            <person name="Gordon D."/>
            <person name="Auger K."/>
            <person name="Wright D."/>
            <person name="Collins J."/>
            <person name="Raisen C."/>
            <person name="Dyer L."/>
            <person name="Leung K."/>
            <person name="Robertson L."/>
            <person name="Ambridge K."/>
            <person name="Leongamornlert D."/>
            <person name="McGuire S."/>
            <person name="Gilderthorp R."/>
            <person name="Griffiths C."/>
            <person name="Manthravadi D."/>
            <person name="Nichol S."/>
            <person name="Barker G."/>
            <person name="Whitehead S."/>
            <person name="Kay M."/>
            <person name="Brown J."/>
            <person name="Murnane C."/>
            <person name="Gray E."/>
            <person name="Humphries M."/>
            <person name="Sycamore N."/>
            <person name="Barker D."/>
            <person name="Saunders D."/>
            <person name="Wallis J."/>
            <person name="Babbage A."/>
            <person name="Hammond S."/>
            <person name="Mashreghi-Mohammadi M."/>
            <person name="Barr L."/>
            <person name="Martin S."/>
            <person name="Wray P."/>
            <person name="Ellington A."/>
            <person name="Matthews N."/>
            <person name="Ellwood M."/>
            <person name="Woodmansey R."/>
            <person name="Clark G."/>
            <person name="Cooper J."/>
            <person name="Tromans A."/>
            <person name="Grafham D."/>
            <person name="Skuce C."/>
            <person name="Pandian R."/>
            <person name="Andrews R."/>
            <person name="Harrison E."/>
            <person name="Kimberley A."/>
            <person name="Garnett J."/>
            <person name="Fosker N."/>
            <person name="Hall R."/>
            <person name="Garner P."/>
            <person name="Kelly D."/>
            <person name="Bird C."/>
            <person name="Palmer S."/>
            <person name="Gehring I."/>
            <person name="Berger A."/>
            <person name="Dooley C.M."/>
            <person name="Ersan-Urun Z."/>
            <person name="Eser C."/>
            <person name="Geiger H."/>
            <person name="Geisler M."/>
            <person name="Karotki L."/>
            <person name="Kirn A."/>
            <person name="Konantz J."/>
            <person name="Konantz M."/>
            <person name="Oberlander M."/>
            <person name="Rudolph-Geiger S."/>
            <person name="Teucke M."/>
            <person name="Lanz C."/>
            <person name="Raddatz G."/>
            <person name="Osoegawa K."/>
            <person name="Zhu B."/>
            <person name="Rapp A."/>
            <person name="Widaa S."/>
            <person name="Langford C."/>
            <person name="Yang F."/>
            <person name="Schuster S.C."/>
            <person name="Carter N.P."/>
            <person name="Harrow J."/>
            <person name="Ning Z."/>
            <person name="Herrero J."/>
            <person name="Searle S.M."/>
            <person name="Enright A."/>
            <person name="Geisler R."/>
            <person name="Plasterk R.H."/>
            <person name="Lee C."/>
            <person name="Westerfield M."/>
            <person name="de Jong P.J."/>
            <person name="Zon L.I."/>
            <person name="Postlethwait J.H."/>
            <person name="Nusslein-Volhard C."/>
            <person name="Hubbard T.J."/>
            <person name="Roest Crollius H."/>
            <person name="Rogers J."/>
            <person name="Stemple D.L."/>
        </authorList>
    </citation>
    <scope>NUCLEOTIDE SEQUENCE [LARGE SCALE GENOMIC DNA]</scope>
    <source>
        <strain>Tuebingen</strain>
    </source>
</reference>
<reference key="2">
    <citation type="submission" date="2004-12" db="EMBL/GenBank/DDBJ databases">
        <authorList>
            <consortium name="NIH - Zebrafish Gene Collection (ZGC) project"/>
        </authorList>
    </citation>
    <scope>NUCLEOTIDE SEQUENCE [LARGE SCALE MRNA]</scope>
    <source>
        <tissue>Olfactory epithelium</tissue>
    </source>
</reference>
<proteinExistence type="evidence at transcript level"/>
<feature type="chain" id="PRO_0000288911" description="GATA zinc finger domain-containing protein 1">
    <location>
        <begin position="1"/>
        <end position="242"/>
    </location>
</feature>
<feature type="zinc finger region" description="GATA-type" evidence="2">
    <location>
        <begin position="9"/>
        <end position="33"/>
    </location>
</feature>
<feature type="region of interest" description="Disordered" evidence="3">
    <location>
        <begin position="44"/>
        <end position="85"/>
    </location>
</feature>
<feature type="compositionally biased region" description="Low complexity" evidence="3">
    <location>
        <begin position="45"/>
        <end position="54"/>
    </location>
</feature>
<feature type="sequence conflict" description="In Ref. 2; AAI15187." evidence="4" ref="2">
    <original>P</original>
    <variation>L</variation>
    <location>
        <position position="141"/>
    </location>
</feature>
<feature type="sequence conflict" description="In Ref. 2; AAI15187." evidence="4" ref="2">
    <original>S</original>
    <variation>N</variation>
    <location>
        <position position="178"/>
    </location>
</feature>
<organism>
    <name type="scientific">Danio rerio</name>
    <name type="common">Zebrafish</name>
    <name type="synonym">Brachydanio rerio</name>
    <dbReference type="NCBI Taxonomy" id="7955"/>
    <lineage>
        <taxon>Eukaryota</taxon>
        <taxon>Metazoa</taxon>
        <taxon>Chordata</taxon>
        <taxon>Craniata</taxon>
        <taxon>Vertebrata</taxon>
        <taxon>Euteleostomi</taxon>
        <taxon>Actinopterygii</taxon>
        <taxon>Neopterygii</taxon>
        <taxon>Teleostei</taxon>
        <taxon>Ostariophysi</taxon>
        <taxon>Cypriniformes</taxon>
        <taxon>Danionidae</taxon>
        <taxon>Danioninae</taxon>
        <taxon>Danio</taxon>
    </lineage>
</organism>